<dbReference type="EMBL" id="AE014075">
    <property type="protein sequence ID" value="AAN80686.1"/>
    <property type="molecule type" value="Genomic_DNA"/>
</dbReference>
<dbReference type="RefSeq" id="WP_000156255.1">
    <property type="nucleotide sequence ID" value="NZ_CP051263.1"/>
</dbReference>
<dbReference type="STRING" id="199310.c2227"/>
<dbReference type="KEGG" id="ecc:c2227"/>
<dbReference type="eggNOG" id="COG4811">
    <property type="taxonomic scope" value="Bacteria"/>
</dbReference>
<dbReference type="HOGENOM" id="CLU_133645_0_0_6"/>
<dbReference type="BioCyc" id="ECOL199310:C2227-MONOMER"/>
<dbReference type="Proteomes" id="UP000001410">
    <property type="component" value="Chromosome"/>
</dbReference>
<dbReference type="GO" id="GO:0005886">
    <property type="term" value="C:plasma membrane"/>
    <property type="evidence" value="ECO:0007669"/>
    <property type="project" value="UniProtKB-SubCell"/>
</dbReference>
<dbReference type="HAMAP" id="MF_01071">
    <property type="entry name" value="UPF0266"/>
    <property type="match status" value="1"/>
</dbReference>
<dbReference type="InterPro" id="IPR009328">
    <property type="entry name" value="DUF986"/>
</dbReference>
<dbReference type="NCBIfam" id="NF002791">
    <property type="entry name" value="PRK02913.1"/>
    <property type="match status" value="1"/>
</dbReference>
<dbReference type="Pfam" id="PF06173">
    <property type="entry name" value="DUF986"/>
    <property type="match status" value="1"/>
</dbReference>
<dbReference type="PIRSF" id="PIRSF020687">
    <property type="entry name" value="UCP020687"/>
    <property type="match status" value="1"/>
</dbReference>
<gene>
    <name type="primary">yobD</name>
    <name type="ordered locus">c2227</name>
</gene>
<comment type="subcellular location">
    <subcellularLocation>
        <location evidence="1">Cell inner membrane</location>
        <topology evidence="1">Multi-pass membrane protein</topology>
    </subcellularLocation>
</comment>
<comment type="similarity">
    <text evidence="3">Belongs to the UPF0266 family.</text>
</comment>
<accession>P67602</accession>
<accession>P76263</accession>
<evidence type="ECO:0000250" key="1"/>
<evidence type="ECO:0000255" key="2"/>
<evidence type="ECO:0000305" key="3"/>
<organism>
    <name type="scientific">Escherichia coli O6:H1 (strain CFT073 / ATCC 700928 / UPEC)</name>
    <dbReference type="NCBI Taxonomy" id="199310"/>
    <lineage>
        <taxon>Bacteria</taxon>
        <taxon>Pseudomonadati</taxon>
        <taxon>Pseudomonadota</taxon>
        <taxon>Gammaproteobacteria</taxon>
        <taxon>Enterobacterales</taxon>
        <taxon>Enterobacteriaceae</taxon>
        <taxon>Escherichia</taxon>
    </lineage>
</organism>
<protein>
    <recommendedName>
        <fullName>UPF0266 membrane protein YobD</fullName>
    </recommendedName>
</protein>
<sequence>MTITDLVLILFIAALLAFAIYDQFIMPRRNGPTLLAIPLLRRGRIDSVIFVGLIVILIYNNVTNHGALITTWLLSALALMGFYIFWIRVPKIIFKQKGFFFANVWIEYSRIKAMNLSEDGVLVMQLEQRRLLIRVRNIDDLEKIYKLLVSTQ</sequence>
<name>YOBD_ECOL6</name>
<feature type="chain" id="PRO_0000218113" description="UPF0266 membrane protein YobD">
    <location>
        <begin position="1"/>
        <end position="152"/>
    </location>
</feature>
<feature type="topological domain" description="Periplasmic" evidence="2">
    <location>
        <begin position="1"/>
        <end position="5"/>
    </location>
</feature>
<feature type="transmembrane region" description="Helical" evidence="2">
    <location>
        <begin position="6"/>
        <end position="26"/>
    </location>
</feature>
<feature type="topological domain" description="Cytoplasmic" evidence="2">
    <location>
        <begin position="27"/>
        <end position="44"/>
    </location>
</feature>
<feature type="transmembrane region" description="Helical" evidence="2">
    <location>
        <begin position="45"/>
        <end position="65"/>
    </location>
</feature>
<feature type="topological domain" description="Periplasmic" evidence="2">
    <location>
        <position position="66"/>
    </location>
</feature>
<feature type="transmembrane region" description="Helical" evidence="2">
    <location>
        <begin position="67"/>
        <end position="87"/>
    </location>
</feature>
<feature type="topological domain" description="Cytoplasmic" evidence="2">
    <location>
        <begin position="88"/>
        <end position="152"/>
    </location>
</feature>
<proteinExistence type="inferred from homology"/>
<keyword id="KW-0997">Cell inner membrane</keyword>
<keyword id="KW-1003">Cell membrane</keyword>
<keyword id="KW-0472">Membrane</keyword>
<keyword id="KW-1185">Reference proteome</keyword>
<keyword id="KW-0812">Transmembrane</keyword>
<keyword id="KW-1133">Transmembrane helix</keyword>
<reference key="1">
    <citation type="journal article" date="2002" name="Proc. Natl. Acad. Sci. U.S.A.">
        <title>Extensive mosaic structure revealed by the complete genome sequence of uropathogenic Escherichia coli.</title>
        <authorList>
            <person name="Welch R.A."/>
            <person name="Burland V."/>
            <person name="Plunkett G. III"/>
            <person name="Redford P."/>
            <person name="Roesch P."/>
            <person name="Rasko D."/>
            <person name="Buckles E.L."/>
            <person name="Liou S.-R."/>
            <person name="Boutin A."/>
            <person name="Hackett J."/>
            <person name="Stroud D."/>
            <person name="Mayhew G.F."/>
            <person name="Rose D.J."/>
            <person name="Zhou S."/>
            <person name="Schwartz D.C."/>
            <person name="Perna N.T."/>
            <person name="Mobley H.L.T."/>
            <person name="Donnenberg M.S."/>
            <person name="Blattner F.R."/>
        </authorList>
    </citation>
    <scope>NUCLEOTIDE SEQUENCE [LARGE SCALE GENOMIC DNA]</scope>
    <source>
        <strain>CFT073 / ATCC 700928 / UPEC</strain>
    </source>
</reference>